<name>Y2137_ERWT9</name>
<dbReference type="EMBL" id="CU468135">
    <property type="protein sequence ID" value="CAO97183.1"/>
    <property type="molecule type" value="Genomic_DNA"/>
</dbReference>
<dbReference type="RefSeq" id="WP_012441854.1">
    <property type="nucleotide sequence ID" value="NC_010694.1"/>
</dbReference>
<dbReference type="SMR" id="B2VC72"/>
<dbReference type="STRING" id="465817.ETA_21370"/>
<dbReference type="KEGG" id="eta:ETA_21370"/>
<dbReference type="eggNOG" id="COG2835">
    <property type="taxonomic scope" value="Bacteria"/>
</dbReference>
<dbReference type="HOGENOM" id="CLU_155659_3_1_6"/>
<dbReference type="OrthoDB" id="9812205at2"/>
<dbReference type="Proteomes" id="UP000001726">
    <property type="component" value="Chromosome"/>
</dbReference>
<dbReference type="GO" id="GO:0005829">
    <property type="term" value="C:cytosol"/>
    <property type="evidence" value="ECO:0007669"/>
    <property type="project" value="TreeGrafter"/>
</dbReference>
<dbReference type="FunFam" id="2.20.25.10:FF:000002">
    <property type="entry name" value="UPF0434 protein YcaR"/>
    <property type="match status" value="1"/>
</dbReference>
<dbReference type="Gene3D" id="2.20.25.10">
    <property type="match status" value="1"/>
</dbReference>
<dbReference type="HAMAP" id="MF_01187">
    <property type="entry name" value="UPF0434"/>
    <property type="match status" value="1"/>
</dbReference>
<dbReference type="InterPro" id="IPR005651">
    <property type="entry name" value="Trm112-like"/>
</dbReference>
<dbReference type="PANTHER" id="PTHR33505:SF4">
    <property type="entry name" value="PROTEIN PREY, MITOCHONDRIAL"/>
    <property type="match status" value="1"/>
</dbReference>
<dbReference type="PANTHER" id="PTHR33505">
    <property type="entry name" value="ZGC:162634"/>
    <property type="match status" value="1"/>
</dbReference>
<dbReference type="Pfam" id="PF03966">
    <property type="entry name" value="Trm112p"/>
    <property type="match status" value="1"/>
</dbReference>
<dbReference type="SUPFAM" id="SSF158997">
    <property type="entry name" value="Trm112p-like"/>
    <property type="match status" value="1"/>
</dbReference>
<organism>
    <name type="scientific">Erwinia tasmaniensis (strain DSM 17950 / CFBP 7177 / CIP 109463 / NCPPB 4357 / Et1/99)</name>
    <dbReference type="NCBI Taxonomy" id="465817"/>
    <lineage>
        <taxon>Bacteria</taxon>
        <taxon>Pseudomonadati</taxon>
        <taxon>Pseudomonadota</taxon>
        <taxon>Gammaproteobacteria</taxon>
        <taxon>Enterobacterales</taxon>
        <taxon>Erwiniaceae</taxon>
        <taxon>Erwinia</taxon>
    </lineage>
</organism>
<proteinExistence type="inferred from homology"/>
<feature type="chain" id="PRO_1000138310" description="UPF0434 protein ETA_21370">
    <location>
        <begin position="1"/>
        <end position="60"/>
    </location>
</feature>
<sequence length="60" mass="6787">MDHRLLEIVACPVCHGKLYYNKEQQELICKPDGLAYPVQDGIPVLLEVEARALTLEESHP</sequence>
<gene>
    <name type="ordered locus">ETA_21370</name>
</gene>
<evidence type="ECO:0000255" key="1">
    <source>
        <dbReference type="HAMAP-Rule" id="MF_01187"/>
    </source>
</evidence>
<protein>
    <recommendedName>
        <fullName evidence="1">UPF0434 protein ETA_21370</fullName>
    </recommendedName>
</protein>
<keyword id="KW-1185">Reference proteome</keyword>
<accession>B2VC72</accession>
<reference key="1">
    <citation type="journal article" date="2008" name="Environ. Microbiol.">
        <title>The genome of Erwinia tasmaniensis strain Et1/99, a non-pathogenic bacterium in the genus Erwinia.</title>
        <authorList>
            <person name="Kube M."/>
            <person name="Migdoll A.M."/>
            <person name="Mueller I."/>
            <person name="Kuhl H."/>
            <person name="Beck A."/>
            <person name="Reinhardt R."/>
            <person name="Geider K."/>
        </authorList>
    </citation>
    <scope>NUCLEOTIDE SEQUENCE [LARGE SCALE GENOMIC DNA]</scope>
    <source>
        <strain>DSM 17950 / CFBP 7177 / CIP 109463 / NCPPB 4357 / Et1/99</strain>
    </source>
</reference>
<comment type="similarity">
    <text evidence="1">Belongs to the UPF0434 family.</text>
</comment>